<reference key="1">
    <citation type="journal article" date="2013" name="Nature">
        <title>The zebrafish reference genome sequence and its relationship to the human genome.</title>
        <authorList>
            <person name="Howe K."/>
            <person name="Clark M.D."/>
            <person name="Torroja C.F."/>
            <person name="Torrance J."/>
            <person name="Berthelot C."/>
            <person name="Muffato M."/>
            <person name="Collins J.E."/>
            <person name="Humphray S."/>
            <person name="McLaren K."/>
            <person name="Matthews L."/>
            <person name="McLaren S."/>
            <person name="Sealy I."/>
            <person name="Caccamo M."/>
            <person name="Churcher C."/>
            <person name="Scott C."/>
            <person name="Barrett J.C."/>
            <person name="Koch R."/>
            <person name="Rauch G.J."/>
            <person name="White S."/>
            <person name="Chow W."/>
            <person name="Kilian B."/>
            <person name="Quintais L.T."/>
            <person name="Guerra-Assuncao J.A."/>
            <person name="Zhou Y."/>
            <person name="Gu Y."/>
            <person name="Yen J."/>
            <person name="Vogel J.H."/>
            <person name="Eyre T."/>
            <person name="Redmond S."/>
            <person name="Banerjee R."/>
            <person name="Chi J."/>
            <person name="Fu B."/>
            <person name="Langley E."/>
            <person name="Maguire S.F."/>
            <person name="Laird G.K."/>
            <person name="Lloyd D."/>
            <person name="Kenyon E."/>
            <person name="Donaldson S."/>
            <person name="Sehra H."/>
            <person name="Almeida-King J."/>
            <person name="Loveland J."/>
            <person name="Trevanion S."/>
            <person name="Jones M."/>
            <person name="Quail M."/>
            <person name="Willey D."/>
            <person name="Hunt A."/>
            <person name="Burton J."/>
            <person name="Sims S."/>
            <person name="McLay K."/>
            <person name="Plumb B."/>
            <person name="Davis J."/>
            <person name="Clee C."/>
            <person name="Oliver K."/>
            <person name="Clark R."/>
            <person name="Riddle C."/>
            <person name="Elliot D."/>
            <person name="Threadgold G."/>
            <person name="Harden G."/>
            <person name="Ware D."/>
            <person name="Begum S."/>
            <person name="Mortimore B."/>
            <person name="Kerry G."/>
            <person name="Heath P."/>
            <person name="Phillimore B."/>
            <person name="Tracey A."/>
            <person name="Corby N."/>
            <person name="Dunn M."/>
            <person name="Johnson C."/>
            <person name="Wood J."/>
            <person name="Clark S."/>
            <person name="Pelan S."/>
            <person name="Griffiths G."/>
            <person name="Smith M."/>
            <person name="Glithero R."/>
            <person name="Howden P."/>
            <person name="Barker N."/>
            <person name="Lloyd C."/>
            <person name="Stevens C."/>
            <person name="Harley J."/>
            <person name="Holt K."/>
            <person name="Panagiotidis G."/>
            <person name="Lovell J."/>
            <person name="Beasley H."/>
            <person name="Henderson C."/>
            <person name="Gordon D."/>
            <person name="Auger K."/>
            <person name="Wright D."/>
            <person name="Collins J."/>
            <person name="Raisen C."/>
            <person name="Dyer L."/>
            <person name="Leung K."/>
            <person name="Robertson L."/>
            <person name="Ambridge K."/>
            <person name="Leongamornlert D."/>
            <person name="McGuire S."/>
            <person name="Gilderthorp R."/>
            <person name="Griffiths C."/>
            <person name="Manthravadi D."/>
            <person name="Nichol S."/>
            <person name="Barker G."/>
            <person name="Whitehead S."/>
            <person name="Kay M."/>
            <person name="Brown J."/>
            <person name="Murnane C."/>
            <person name="Gray E."/>
            <person name="Humphries M."/>
            <person name="Sycamore N."/>
            <person name="Barker D."/>
            <person name="Saunders D."/>
            <person name="Wallis J."/>
            <person name="Babbage A."/>
            <person name="Hammond S."/>
            <person name="Mashreghi-Mohammadi M."/>
            <person name="Barr L."/>
            <person name="Martin S."/>
            <person name="Wray P."/>
            <person name="Ellington A."/>
            <person name="Matthews N."/>
            <person name="Ellwood M."/>
            <person name="Woodmansey R."/>
            <person name="Clark G."/>
            <person name="Cooper J."/>
            <person name="Tromans A."/>
            <person name="Grafham D."/>
            <person name="Skuce C."/>
            <person name="Pandian R."/>
            <person name="Andrews R."/>
            <person name="Harrison E."/>
            <person name="Kimberley A."/>
            <person name="Garnett J."/>
            <person name="Fosker N."/>
            <person name="Hall R."/>
            <person name="Garner P."/>
            <person name="Kelly D."/>
            <person name="Bird C."/>
            <person name="Palmer S."/>
            <person name="Gehring I."/>
            <person name="Berger A."/>
            <person name="Dooley C.M."/>
            <person name="Ersan-Urun Z."/>
            <person name="Eser C."/>
            <person name="Geiger H."/>
            <person name="Geisler M."/>
            <person name="Karotki L."/>
            <person name="Kirn A."/>
            <person name="Konantz J."/>
            <person name="Konantz M."/>
            <person name="Oberlander M."/>
            <person name="Rudolph-Geiger S."/>
            <person name="Teucke M."/>
            <person name="Lanz C."/>
            <person name="Raddatz G."/>
            <person name="Osoegawa K."/>
            <person name="Zhu B."/>
            <person name="Rapp A."/>
            <person name="Widaa S."/>
            <person name="Langford C."/>
            <person name="Yang F."/>
            <person name="Schuster S.C."/>
            <person name="Carter N.P."/>
            <person name="Harrow J."/>
            <person name="Ning Z."/>
            <person name="Herrero J."/>
            <person name="Searle S.M."/>
            <person name="Enright A."/>
            <person name="Geisler R."/>
            <person name="Plasterk R.H."/>
            <person name="Lee C."/>
            <person name="Westerfield M."/>
            <person name="de Jong P.J."/>
            <person name="Zon L.I."/>
            <person name="Postlethwait J.H."/>
            <person name="Nusslein-Volhard C."/>
            <person name="Hubbard T.J."/>
            <person name="Roest Crollius H."/>
            <person name="Rogers J."/>
            <person name="Stemple D.L."/>
        </authorList>
    </citation>
    <scope>NUCLEOTIDE SEQUENCE [LARGE SCALE GENOMIC DNA]</scope>
    <source>
        <strain>Tuebingen</strain>
    </source>
</reference>
<reference key="2">
    <citation type="journal article" date="2015" name="Nat. Commun.">
        <title>TCTEX1D2 mutations underlie Jeune asphyxiating thoracic dystrophy with impaired retrograde intraflagellar transport.</title>
        <authorList>
            <consortium name="UK10K"/>
            <person name="Schmidts M."/>
            <person name="Hou Y."/>
            <person name="Cortes C.R."/>
            <person name="Mans D.A."/>
            <person name="Huber C."/>
            <person name="Boldt K."/>
            <person name="Patel M."/>
            <person name="van Reeuwijk J."/>
            <person name="Plaza J.M."/>
            <person name="van Beersum S.E."/>
            <person name="Yap Z.M."/>
            <person name="Letteboer S.J."/>
            <person name="Taylor S.P."/>
            <person name="Herridge W."/>
            <person name="Johnson C.A."/>
            <person name="Scambler P.J."/>
            <person name="Ueffing M."/>
            <person name="Kayserili H."/>
            <person name="Krakow D."/>
            <person name="King S.M."/>
            <person name="Beales P.L."/>
            <person name="Al-Gazali L."/>
            <person name="Wicking C."/>
            <person name="Cormier-Daire V."/>
            <person name="Roepman R."/>
            <person name="Mitchison H.M."/>
            <person name="Witman G.B."/>
        </authorList>
    </citation>
    <scope>FUNCTION</scope>
    <scope>DISRUPTION PHENOTYPE</scope>
</reference>
<reference key="3">
    <citation type="journal article" date="2016" name="Nat. Commun.">
        <authorList>
            <consortium name="UK10K"/>
            <person name="Schmidts M."/>
            <person name="Hou Y."/>
            <person name="Cortes C.R."/>
            <person name="Mans D.A."/>
            <person name="Huber C."/>
            <person name="Boldt K."/>
            <person name="Patel M."/>
            <person name="van Reeuwijk J."/>
            <person name="Plaza J.M."/>
            <person name="van Beersum S.E."/>
            <person name="Yap Z.M."/>
            <person name="Letteboer S.J."/>
            <person name="Taylor S.P."/>
            <person name="Herridge W."/>
            <person name="Johnson C.A."/>
            <person name="Scambler P.J."/>
            <person name="Ueffing M."/>
            <person name="Kayserili H."/>
            <person name="Krakow D."/>
            <person name="King S.M."/>
            <person name="Beales P.L."/>
            <person name="Al-Gazali L."/>
            <person name="Wicking C."/>
            <person name="Cormier-Daire V."/>
            <person name="Roepman R."/>
            <person name="Mitchison H.M."/>
            <person name="Witman G.B."/>
        </authorList>
    </citation>
    <scope>ERRATUM OF PUBMED:26044572</scope>
</reference>
<accession>F1QMY1</accession>
<feature type="chain" id="PRO_0000451272" description="Dynein light chain Tctex-type protein 2B">
    <location>
        <begin position="1"/>
        <end position="150"/>
    </location>
</feature>
<gene>
    <name type="primary">dynlt2b</name>
    <name type="synonym">tctex1d2</name>
</gene>
<organism>
    <name type="scientific">Danio rerio</name>
    <name type="common">Zebrafish</name>
    <name type="synonym">Brachydanio rerio</name>
    <dbReference type="NCBI Taxonomy" id="7955"/>
    <lineage>
        <taxon>Eukaryota</taxon>
        <taxon>Metazoa</taxon>
        <taxon>Chordata</taxon>
        <taxon>Craniata</taxon>
        <taxon>Vertebrata</taxon>
        <taxon>Euteleostomi</taxon>
        <taxon>Actinopterygii</taxon>
        <taxon>Neopterygii</taxon>
        <taxon>Teleostei</taxon>
        <taxon>Ostariophysi</taxon>
        <taxon>Cypriniformes</taxon>
        <taxon>Danionidae</taxon>
        <taxon>Danioninae</taxon>
        <taxon>Danio</taxon>
    </lineage>
</organism>
<comment type="function">
    <text evidence="1 2">Acts as one of several non-catalytic accessory components of the cytoplasmic dynein 2 complex (dynein-2 complex), a motor protein complex that drives the movement of cargos along microtubules within cilia and flagella in concert with the intraflagellar transport (IFT) system (By similarity). Required for proper retrograde ciliary transport (PubMed:26044572).</text>
</comment>
<comment type="subcellular location">
    <subcellularLocation>
        <location evidence="1">Dynein axonemal particle</location>
    </subcellularLocation>
</comment>
<comment type="disruption phenotype">
    <text evidence="2">Morpholino knockdown of the protein produces a dose dependent typical ciliopathy phenotype, with ventrally curved body axis, hydrocephalus, abnormal otoliths and small eyes. The few embryos surviving to 4 days post fertilization display severe generalized edema, pronephric cysts, and defects of the craniofacial cartilage.</text>
</comment>
<comment type="similarity">
    <text evidence="3">Belongs to the dynein light chain Tctex-type family.</text>
</comment>
<protein>
    <recommendedName>
        <fullName evidence="3">Dynein light chain Tctex-type protein 2B</fullName>
    </recommendedName>
    <alternativeName>
        <fullName>Tctex1 domain-containing protein 2</fullName>
    </alternativeName>
</protein>
<evidence type="ECO:0000250" key="1">
    <source>
        <dbReference type="UniProtKB" id="Q8WW35"/>
    </source>
</evidence>
<evidence type="ECO:0000269" key="2">
    <source>
    </source>
</evidence>
<evidence type="ECO:0000305" key="3"/>
<name>DYT2B_DANRE</name>
<proteinExistence type="inferred from homology"/>
<keyword id="KW-0963">Cytoplasm</keyword>
<keyword id="KW-1185">Reference proteome</keyword>
<sequence>MKPSCYDNVGKAVKRKCETTIAQKRDISLMDTGANTYLIRPNYKDKFKAGVAKECIGEILREQLYGVQYDPEEVPTLSRSLADSIKHKLKDMAFDRYKFIVQVVIGEQRGEGVKMAARCFWDADTDNYAQEIYMNDSLFCVAAAFAVYYY</sequence>
<dbReference type="EMBL" id="CU207281">
    <property type="status" value="NOT_ANNOTATED_CDS"/>
    <property type="molecule type" value="Genomic_DNA"/>
</dbReference>
<dbReference type="RefSeq" id="NP_001410688.1">
    <property type="nucleotide sequence ID" value="NM_001423759.1"/>
</dbReference>
<dbReference type="RefSeq" id="XP_685487.3">
    <property type="nucleotide sequence ID" value="XM_680395.7"/>
</dbReference>
<dbReference type="SMR" id="F1QMY1"/>
<dbReference type="FunCoup" id="F1QMY1">
    <property type="interactions" value="698"/>
</dbReference>
<dbReference type="PaxDb" id="7955-ENSDARP00000070898"/>
<dbReference type="Ensembl" id="ENSDART00000076424">
    <property type="protein sequence ID" value="ENSDARP00000070898"/>
    <property type="gene ID" value="ENSDARG00000054255"/>
</dbReference>
<dbReference type="GeneID" id="553323"/>
<dbReference type="AGR" id="ZFIN:ZDB-GENE-081104-219"/>
<dbReference type="ZFIN" id="ZDB-GENE-081104-219">
    <property type="gene designation" value="dynlt2b"/>
</dbReference>
<dbReference type="eggNOG" id="KOG4108">
    <property type="taxonomic scope" value="Eukaryota"/>
</dbReference>
<dbReference type="HOGENOM" id="CLU_097204_4_1_1"/>
<dbReference type="InParanoid" id="F1QMY1"/>
<dbReference type="OrthoDB" id="10260741at2759"/>
<dbReference type="PhylomeDB" id="F1QMY1"/>
<dbReference type="TreeFam" id="TF313904"/>
<dbReference type="PRO" id="PR:F1QMY1"/>
<dbReference type="Proteomes" id="UP000000437">
    <property type="component" value="Chromosome 22"/>
</dbReference>
<dbReference type="Bgee" id="ENSDARG00000054255">
    <property type="expression patterns" value="Expressed in testis and 24 other cell types or tissues"/>
</dbReference>
<dbReference type="ExpressionAtlas" id="F1QMY1">
    <property type="expression patterns" value="baseline and differential"/>
</dbReference>
<dbReference type="GO" id="GO:0005929">
    <property type="term" value="C:cilium"/>
    <property type="evidence" value="ECO:0007669"/>
    <property type="project" value="GOC"/>
</dbReference>
<dbReference type="GO" id="GO:0005737">
    <property type="term" value="C:cytoplasm"/>
    <property type="evidence" value="ECO:0000318"/>
    <property type="project" value="GO_Central"/>
</dbReference>
<dbReference type="GO" id="GO:0005868">
    <property type="term" value="C:cytoplasmic dynein complex"/>
    <property type="evidence" value="ECO:0000250"/>
    <property type="project" value="UniProtKB"/>
</dbReference>
<dbReference type="GO" id="GO:0120293">
    <property type="term" value="C:dynein axonemal particle"/>
    <property type="evidence" value="ECO:0007669"/>
    <property type="project" value="UniProtKB-SubCell"/>
</dbReference>
<dbReference type="GO" id="GO:0045505">
    <property type="term" value="F:dynein intermediate chain binding"/>
    <property type="evidence" value="ECO:0000318"/>
    <property type="project" value="GO_Central"/>
</dbReference>
<dbReference type="GO" id="GO:0035721">
    <property type="term" value="P:intraciliary retrograde transport"/>
    <property type="evidence" value="ECO:0000250"/>
    <property type="project" value="UniProtKB"/>
</dbReference>
<dbReference type="GO" id="GO:0007018">
    <property type="term" value="P:microtubule-based movement"/>
    <property type="evidence" value="ECO:0000318"/>
    <property type="project" value="GO_Central"/>
</dbReference>
<dbReference type="CDD" id="cd21459">
    <property type="entry name" value="DLC-like_TCTEX1D2"/>
    <property type="match status" value="1"/>
</dbReference>
<dbReference type="FunFam" id="3.30.1140.40:FF:000003">
    <property type="entry name" value="tctex1 domain-containing protein 2"/>
    <property type="match status" value="1"/>
</dbReference>
<dbReference type="Gene3D" id="3.30.1140.40">
    <property type="entry name" value="Tctex-1"/>
    <property type="match status" value="1"/>
</dbReference>
<dbReference type="InterPro" id="IPR005334">
    <property type="entry name" value="Tctex-1-like"/>
</dbReference>
<dbReference type="InterPro" id="IPR038586">
    <property type="entry name" value="Tctex-1-like_sf"/>
</dbReference>
<dbReference type="PANTHER" id="PTHR21255:SF7">
    <property type="entry name" value="DYNEIN LIGHT CHAIN TCTEX-TYPE PROTEIN 2B"/>
    <property type="match status" value="1"/>
</dbReference>
<dbReference type="PANTHER" id="PTHR21255">
    <property type="entry name" value="T-COMPLEX-ASSOCIATED-TESTIS-EXPRESSED 1/ DYNEIN LIGHT CHAIN"/>
    <property type="match status" value="1"/>
</dbReference>
<dbReference type="Pfam" id="PF03645">
    <property type="entry name" value="Tctex-1"/>
    <property type="match status" value="1"/>
</dbReference>